<organism>
    <name type="scientific">Rippkaea orientalis (strain PCC 8801 / RF-1)</name>
    <name type="common">Cyanothece sp. (strain PCC 8801)</name>
    <dbReference type="NCBI Taxonomy" id="41431"/>
    <lineage>
        <taxon>Bacteria</taxon>
        <taxon>Bacillati</taxon>
        <taxon>Cyanobacteriota</taxon>
        <taxon>Cyanophyceae</taxon>
        <taxon>Oscillatoriophycideae</taxon>
        <taxon>Chroococcales</taxon>
        <taxon>Aphanothecaceae</taxon>
        <taxon>Rippkaea</taxon>
        <taxon>Rippkaea orientalis</taxon>
    </lineage>
</organism>
<comment type="function">
    <text evidence="1">One of the primary rRNA binding proteins, it binds directly to 16S rRNA central domain where it helps coordinate assembly of the platform of the 30S subunit.</text>
</comment>
<comment type="subunit">
    <text evidence="1">Part of the 30S ribosomal subunit. Contacts proteins S5 and S12.</text>
</comment>
<comment type="similarity">
    <text evidence="1">Belongs to the universal ribosomal protein uS8 family.</text>
</comment>
<gene>
    <name evidence="1" type="primary">rpsH</name>
    <name evidence="1" type="synonym">rps8</name>
    <name type="ordered locus">PCC8801_0239</name>
</gene>
<proteinExistence type="inferred from homology"/>
<reference key="1">
    <citation type="journal article" date="2011" name="MBio">
        <title>Novel metabolic attributes of the genus Cyanothece, comprising a group of unicellular nitrogen-fixing Cyanobacteria.</title>
        <authorList>
            <person name="Bandyopadhyay A."/>
            <person name="Elvitigala T."/>
            <person name="Welsh E."/>
            <person name="Stockel J."/>
            <person name="Liberton M."/>
            <person name="Min H."/>
            <person name="Sherman L.A."/>
            <person name="Pakrasi H.B."/>
        </authorList>
    </citation>
    <scope>NUCLEOTIDE SEQUENCE [LARGE SCALE GENOMIC DNA]</scope>
    <source>
        <strain>PCC 8801 / RF-1</strain>
    </source>
</reference>
<name>RS8_RIPO1</name>
<evidence type="ECO:0000255" key="1">
    <source>
        <dbReference type="HAMAP-Rule" id="MF_01302"/>
    </source>
</evidence>
<evidence type="ECO:0000305" key="2"/>
<sequence length="133" mass="14939">MAPNDTISDMLTRIRNACAVRHPTTQVPTTKMTRSIAQVLKEEGFIEGFEETGEGVQKYLVLTLKYKDKNRQPIINMLKRVSKPGLRVYSNCKDLPRVLGGIGIAIVSTSKGIMTDREARRQNVGGEILCYIW</sequence>
<protein>
    <recommendedName>
        <fullName evidence="1">Small ribosomal subunit protein uS8</fullName>
    </recommendedName>
    <alternativeName>
        <fullName evidence="2">30S ribosomal protein S8</fullName>
    </alternativeName>
</protein>
<keyword id="KW-1185">Reference proteome</keyword>
<keyword id="KW-0687">Ribonucleoprotein</keyword>
<keyword id="KW-0689">Ribosomal protein</keyword>
<keyword id="KW-0694">RNA-binding</keyword>
<keyword id="KW-0699">rRNA-binding</keyword>
<accession>B7K235</accession>
<dbReference type="EMBL" id="CP001287">
    <property type="protein sequence ID" value="ACK64342.1"/>
    <property type="molecule type" value="Genomic_DNA"/>
</dbReference>
<dbReference type="RefSeq" id="WP_012593619.1">
    <property type="nucleotide sequence ID" value="NC_011726.1"/>
</dbReference>
<dbReference type="SMR" id="B7K235"/>
<dbReference type="STRING" id="41431.PCC8801_0239"/>
<dbReference type="KEGG" id="cyp:PCC8801_0239"/>
<dbReference type="eggNOG" id="COG0096">
    <property type="taxonomic scope" value="Bacteria"/>
</dbReference>
<dbReference type="HOGENOM" id="CLU_098428_0_2_3"/>
<dbReference type="OrthoDB" id="9802617at2"/>
<dbReference type="Proteomes" id="UP000008204">
    <property type="component" value="Chromosome"/>
</dbReference>
<dbReference type="GO" id="GO:1990904">
    <property type="term" value="C:ribonucleoprotein complex"/>
    <property type="evidence" value="ECO:0007669"/>
    <property type="project" value="UniProtKB-KW"/>
</dbReference>
<dbReference type="GO" id="GO:0005840">
    <property type="term" value="C:ribosome"/>
    <property type="evidence" value="ECO:0007669"/>
    <property type="project" value="UniProtKB-KW"/>
</dbReference>
<dbReference type="GO" id="GO:0019843">
    <property type="term" value="F:rRNA binding"/>
    <property type="evidence" value="ECO:0007669"/>
    <property type="project" value="UniProtKB-UniRule"/>
</dbReference>
<dbReference type="GO" id="GO:0003735">
    <property type="term" value="F:structural constituent of ribosome"/>
    <property type="evidence" value="ECO:0007669"/>
    <property type="project" value="InterPro"/>
</dbReference>
<dbReference type="GO" id="GO:0006412">
    <property type="term" value="P:translation"/>
    <property type="evidence" value="ECO:0007669"/>
    <property type="project" value="UniProtKB-UniRule"/>
</dbReference>
<dbReference type="FunFam" id="3.30.1370.30:FF:000002">
    <property type="entry name" value="30S ribosomal protein S8"/>
    <property type="match status" value="1"/>
</dbReference>
<dbReference type="FunFam" id="3.30.1490.10:FF:000001">
    <property type="entry name" value="30S ribosomal protein S8"/>
    <property type="match status" value="1"/>
</dbReference>
<dbReference type="Gene3D" id="3.30.1370.30">
    <property type="match status" value="1"/>
</dbReference>
<dbReference type="Gene3D" id="3.30.1490.10">
    <property type="match status" value="1"/>
</dbReference>
<dbReference type="HAMAP" id="MF_01302_B">
    <property type="entry name" value="Ribosomal_uS8_B"/>
    <property type="match status" value="1"/>
</dbReference>
<dbReference type="InterPro" id="IPR000630">
    <property type="entry name" value="Ribosomal_uS8"/>
</dbReference>
<dbReference type="InterPro" id="IPR047863">
    <property type="entry name" value="Ribosomal_uS8_CS"/>
</dbReference>
<dbReference type="InterPro" id="IPR035987">
    <property type="entry name" value="Ribosomal_uS8_sf"/>
</dbReference>
<dbReference type="NCBIfam" id="NF001109">
    <property type="entry name" value="PRK00136.1"/>
    <property type="match status" value="1"/>
</dbReference>
<dbReference type="PANTHER" id="PTHR11758">
    <property type="entry name" value="40S RIBOSOMAL PROTEIN S15A"/>
    <property type="match status" value="1"/>
</dbReference>
<dbReference type="Pfam" id="PF00410">
    <property type="entry name" value="Ribosomal_S8"/>
    <property type="match status" value="1"/>
</dbReference>
<dbReference type="SUPFAM" id="SSF56047">
    <property type="entry name" value="Ribosomal protein S8"/>
    <property type="match status" value="1"/>
</dbReference>
<dbReference type="PROSITE" id="PS00053">
    <property type="entry name" value="RIBOSOMAL_S8"/>
    <property type="match status" value="1"/>
</dbReference>
<feature type="chain" id="PRO_1000140542" description="Small ribosomal subunit protein uS8">
    <location>
        <begin position="1"/>
        <end position="133"/>
    </location>
</feature>